<sequence length="715" mass="77357">MQRRTRGASSLRLARCLTPANLIRGDNAGVPERRIFGGCLLPTPEGLLSAAVGALRQRSDDAQPAFLTCTDRSVRLAARQHNTVPESLIVDGLASDPHYEYIRHYASAATQALGEVELTGGQLSRAILTQYWKYLQTVVPSGLDVPEDPVGDCDPSLHVLLRPTLAPKLLARTPFKSGAAAAKYAATVAGLRDALHRIQQYMFFMRPADPSRPSTDTALRLNELLAYVSVLYRWASWMLWTTDKHVCHRLSPSNRRFLPLGGSPEAPAETFARHLDRGPSGTTGSMQCMALRAAVSDVLGHLTRLANLWQTGKRSGGTYGTVDTVVSTVEVLSIVHHHAQYIINATLTGYGVWATDSLNNEYLRAAVDSQERFCRTTAPLFPTMTAPSWARMELSIKAWFGAALAADLLRSGAPSLHYESILRLVASRRTTWSAGPPPDDMARGPGGHRAGGGTVGKRFSGPARQRAPAPPPTSPTLDPRGHPAVPEAPRGRPAPPLPDADDPVAEPPGCAAQPATYYTHMGEVPPRLPARNVAGPDRRPPAATCPLLVRRASLGSLDRPRGWGPAPEGEPDQMEATYLTADDDDDARRKATHAASARERHAPYEDDESIYETVSEDGGRVYEEIPWMRVYENVCANTANAAPASPYIEAENPLYDWGGSALFSPPPRPPPPPPLSPSPVLARHRANALTNDGPTNVAALSALLTKLKREGRRSR</sequence>
<organism>
    <name type="scientific">Human herpesvirus 1 (strain F)</name>
    <name type="common">HHV-1</name>
    <name type="synonym">Human herpes simplex virus 1</name>
    <dbReference type="NCBI Taxonomy" id="10304"/>
    <lineage>
        <taxon>Viruses</taxon>
        <taxon>Duplodnaviria</taxon>
        <taxon>Heunggongvirae</taxon>
        <taxon>Peploviricota</taxon>
        <taxon>Herviviricetes</taxon>
        <taxon>Herpesvirales</taxon>
        <taxon>Orthoherpesviridae</taxon>
        <taxon>Alphaherpesvirinae</taxon>
        <taxon>Simplexvirus</taxon>
        <taxon>Simplexvirus humanalpha1</taxon>
        <taxon>Human herpesvirus 1</taxon>
    </lineage>
</organism>
<comment type="function">
    <text evidence="1">Plays a role in the activation of the host PI3K/AKT pathway to promote cell survival. Interacts with and activates host LCK and thereby recruits downstream partners SHC1, GRB2 and PI3KR1 in order to activate the PI3K pathway by phosphorylating host AKT on its activating residues. This mechanism is inhibited by the viral protein US3 that instead promotes incorporation of UL46 into virions.</text>
</comment>
<comment type="subunit">
    <text evidence="1">Interacts with VP16. Interacts with host LCK, PIK3R1, SHC1 AND GRB2; these interactions promote the activation of the PI3K/AKT pathway. Interacts with host YWHAB. Interacts with ICP0; this interaction targets UL46 for degradation by the proteasome.</text>
</comment>
<comment type="subcellular location">
    <subcellularLocation>
        <location evidence="1">Virion tegument</location>
    </subcellularLocation>
    <subcellularLocation>
        <location evidence="1">Host cell membrane</location>
        <topology evidence="1">Peripheral membrane protein</topology>
    </subcellularLocation>
</comment>
<comment type="PTM">
    <text evidence="1">Phosphorylated by host LCK. The phosphorylation seems to be lymphocyte-specific.</text>
</comment>
<comment type="similarity">
    <text evidence="3">Belongs to the herpesviridae HHV-1 VP11/12 protein family.</text>
</comment>
<gene>
    <name type="ORF">UL46</name>
</gene>
<reference key="1">
    <citation type="journal article" date="1987" name="J. Virol.">
        <title>Characterization and nucleotide sequence of two herpes simplex virus 1 genes whose products modulate alpha-trans-inducing factor-dependent activation of alpha genes.</title>
        <authorList>
            <person name="McKnight J.L.C."/>
            <person name="Pellett P.E."/>
            <person name="Jenkins F.J."/>
            <person name="Roizman B."/>
        </authorList>
    </citation>
    <scope>NUCLEOTIDE SEQUENCE [GENOMIC DNA]</scope>
</reference>
<evidence type="ECO:0000250" key="1">
    <source>
        <dbReference type="UniProtKB" id="P10230"/>
    </source>
</evidence>
<evidence type="ECO:0000256" key="2">
    <source>
        <dbReference type="SAM" id="MobiDB-lite"/>
    </source>
</evidence>
<evidence type="ECO:0000305" key="3"/>
<name>TEG1_HHV1F</name>
<accession>P08314</accession>
<feature type="chain" id="PRO_0000115793" description="Tegument protein UL46">
    <location>
        <begin position="1"/>
        <end position="715"/>
    </location>
</feature>
<feature type="region of interest" description="Disordered" evidence="2">
    <location>
        <begin position="432"/>
        <end position="513"/>
    </location>
</feature>
<feature type="region of interest" description="Disordered" evidence="2">
    <location>
        <begin position="585"/>
        <end position="605"/>
    </location>
</feature>
<feature type="region of interest" description="Disordered" evidence="2">
    <location>
        <begin position="659"/>
        <end position="680"/>
    </location>
</feature>
<feature type="compositionally biased region" description="Gly residues" evidence="2">
    <location>
        <begin position="444"/>
        <end position="455"/>
    </location>
</feature>
<feature type="compositionally biased region" description="Low complexity" evidence="2">
    <location>
        <begin position="456"/>
        <end position="467"/>
    </location>
</feature>
<feature type="compositionally biased region" description="Low complexity" evidence="2">
    <location>
        <begin position="475"/>
        <end position="488"/>
    </location>
</feature>
<feature type="compositionally biased region" description="Pro residues" evidence="2">
    <location>
        <begin position="664"/>
        <end position="677"/>
    </location>
</feature>
<keyword id="KW-0010">Activator</keyword>
<keyword id="KW-1032">Host cell membrane</keyword>
<keyword id="KW-1043">Host membrane</keyword>
<keyword id="KW-0472">Membrane</keyword>
<keyword id="KW-0597">Phosphoprotein</keyword>
<keyword id="KW-0804">Transcription</keyword>
<keyword id="KW-0805">Transcription regulation</keyword>
<keyword id="KW-0946">Virion</keyword>
<keyword id="KW-0920">Virion tegument</keyword>
<proteinExistence type="inferred from homology"/>
<protein>
    <recommendedName>
        <fullName>Tegument protein UL46</fullName>
    </recommendedName>
    <alternativeName>
        <fullName>Tegument protein VP11/12</fullName>
    </alternativeName>
</protein>
<organismHost>
    <name type="scientific">Homo sapiens</name>
    <name type="common">Human</name>
    <dbReference type="NCBI Taxonomy" id="9606"/>
</organismHost>
<dbReference type="EMBL" id="M15621">
    <property type="protein sequence ID" value="AAA45768.1"/>
    <property type="molecule type" value="Genomic_DNA"/>
</dbReference>
<dbReference type="PIR" id="B26133">
    <property type="entry name" value="TNBE77"/>
</dbReference>
<dbReference type="GO" id="GO:0020002">
    <property type="term" value="C:host cell plasma membrane"/>
    <property type="evidence" value="ECO:0007669"/>
    <property type="project" value="UniProtKB-SubCell"/>
</dbReference>
<dbReference type="GO" id="GO:0016020">
    <property type="term" value="C:membrane"/>
    <property type="evidence" value="ECO:0007669"/>
    <property type="project" value="UniProtKB-KW"/>
</dbReference>
<dbReference type="GO" id="GO:0019033">
    <property type="term" value="C:viral tegument"/>
    <property type="evidence" value="ECO:0007669"/>
    <property type="project" value="UniProtKB-SubCell"/>
</dbReference>
<dbReference type="GO" id="GO:0006355">
    <property type="term" value="P:regulation of DNA-templated transcription"/>
    <property type="evidence" value="ECO:0007669"/>
    <property type="project" value="InterPro"/>
</dbReference>
<dbReference type="InterPro" id="IPR005051">
    <property type="entry name" value="Herpes_UL46"/>
</dbReference>
<dbReference type="Pfam" id="PF03387">
    <property type="entry name" value="Herpes_UL46"/>
    <property type="match status" value="1"/>
</dbReference>